<comment type="function">
    <text evidence="1 2">Deubiquitinating enzyme that plays a role in behavior, possibly by regulating GABA action. May act by mediating the deubiquitination of GAD1/GAD67 (By similarity). Has almost no deubiquitinating activity by itself and requires the interaction with WDR48 to have a high activity. Not involved in deubiquitination of monoubiquitinated FANCD2 (By similarity).</text>
</comment>
<comment type="catalytic activity">
    <reaction evidence="4">
        <text>Thiol-dependent hydrolysis of ester, thioester, amide, peptide and isopeptide bonds formed by the C-terminal Gly of ubiquitin (a 76-residue protein attached to proteins as an intracellular targeting signal).</text>
        <dbReference type="EC" id="3.4.19.12"/>
    </reaction>
</comment>
<comment type="subunit">
    <text evidence="1">Interacts with WDR48. Interacts with WDR20. Interacts with DMWD. Component of the USP46/WDR20/WDR48 deubiquitinating complex.</text>
</comment>
<comment type="subcellular location">
    <subcellularLocation>
        <location evidence="1">Cytoplasm</location>
    </subcellularLocation>
    <text evidence="1">USP46/WDR48/WDR20 complex is predominantly cytoplasmic.</text>
</comment>
<comment type="tissue specificity">
    <text evidence="4">Detected in lung and spleen, and at lower levels in brain, kidney, testis and liver.</text>
</comment>
<comment type="similarity">
    <text evidence="5">Belongs to the peptidase C19 family. USP12/USP46 subfamily.</text>
</comment>
<reference evidence="7" key="1">
    <citation type="journal article" date="2011" name="PLoS ONE">
        <title>Lysine 92 amino acid residue of USP46, a gene associated with 'behavioral despair' in mice, influences the deubiquitinating enzyme activity.</title>
        <authorList>
            <person name="Zhang W."/>
            <person name="Tian Q.B."/>
            <person name="Li Q.K."/>
            <person name="Wang J.M."/>
            <person name="Wang C.N."/>
            <person name="Liu T."/>
            <person name="Liu D.W."/>
            <person name="Wang M.W."/>
        </authorList>
    </citation>
    <scope>NUCLEOTIDE SEQUENCE [MRNA]</scope>
    <scope>CATALYTIC ACTIVITY</scope>
    <scope>ACTIVE SITE</scope>
    <scope>MUTAGENESIS OF CYS-44 AND LYS-92</scope>
    <scope>TISSUE SPECIFICITY</scope>
    <source>
        <strain evidence="7">Wistar</strain>
        <tissue evidence="7">Brain</tissue>
    </source>
</reference>
<reference key="2">
    <citation type="journal article" date="2004" name="Nature">
        <title>Genome sequence of the Brown Norway rat yields insights into mammalian evolution.</title>
        <authorList>
            <person name="Gibbs R.A."/>
            <person name="Weinstock G.M."/>
            <person name="Metzker M.L."/>
            <person name="Muzny D.M."/>
            <person name="Sodergren E.J."/>
            <person name="Scherer S."/>
            <person name="Scott G."/>
            <person name="Steffen D."/>
            <person name="Worley K.C."/>
            <person name="Burch P.E."/>
            <person name="Okwuonu G."/>
            <person name="Hines S."/>
            <person name="Lewis L."/>
            <person name="Deramo C."/>
            <person name="Delgado O."/>
            <person name="Dugan-Rocha S."/>
            <person name="Miner G."/>
            <person name="Morgan M."/>
            <person name="Hawes A."/>
            <person name="Gill R."/>
            <person name="Holt R.A."/>
            <person name="Adams M.D."/>
            <person name="Amanatides P.G."/>
            <person name="Baden-Tillson H."/>
            <person name="Barnstead M."/>
            <person name="Chin S."/>
            <person name="Evans C.A."/>
            <person name="Ferriera S."/>
            <person name="Fosler C."/>
            <person name="Glodek A."/>
            <person name="Gu Z."/>
            <person name="Jennings D."/>
            <person name="Kraft C.L."/>
            <person name="Nguyen T."/>
            <person name="Pfannkoch C.M."/>
            <person name="Sitter C."/>
            <person name="Sutton G.G."/>
            <person name="Venter J.C."/>
            <person name="Woodage T."/>
            <person name="Smith D."/>
            <person name="Lee H.-M."/>
            <person name="Gustafson E."/>
            <person name="Cahill P."/>
            <person name="Kana A."/>
            <person name="Doucette-Stamm L."/>
            <person name="Weinstock K."/>
            <person name="Fechtel K."/>
            <person name="Weiss R.B."/>
            <person name="Dunn D.M."/>
            <person name="Green E.D."/>
            <person name="Blakesley R.W."/>
            <person name="Bouffard G.G."/>
            <person name="De Jong P.J."/>
            <person name="Osoegawa K."/>
            <person name="Zhu B."/>
            <person name="Marra M."/>
            <person name="Schein J."/>
            <person name="Bosdet I."/>
            <person name="Fjell C."/>
            <person name="Jones S."/>
            <person name="Krzywinski M."/>
            <person name="Mathewson C."/>
            <person name="Siddiqui A."/>
            <person name="Wye N."/>
            <person name="McPherson J."/>
            <person name="Zhao S."/>
            <person name="Fraser C.M."/>
            <person name="Shetty J."/>
            <person name="Shatsman S."/>
            <person name="Geer K."/>
            <person name="Chen Y."/>
            <person name="Abramzon S."/>
            <person name="Nierman W.C."/>
            <person name="Havlak P.H."/>
            <person name="Chen R."/>
            <person name="Durbin K.J."/>
            <person name="Egan A."/>
            <person name="Ren Y."/>
            <person name="Song X.-Z."/>
            <person name="Li B."/>
            <person name="Liu Y."/>
            <person name="Qin X."/>
            <person name="Cawley S."/>
            <person name="Cooney A.J."/>
            <person name="D'Souza L.M."/>
            <person name="Martin K."/>
            <person name="Wu J.Q."/>
            <person name="Gonzalez-Garay M.L."/>
            <person name="Jackson A.R."/>
            <person name="Kalafus K.J."/>
            <person name="McLeod M.P."/>
            <person name="Milosavljevic A."/>
            <person name="Virk D."/>
            <person name="Volkov A."/>
            <person name="Wheeler D.A."/>
            <person name="Zhang Z."/>
            <person name="Bailey J.A."/>
            <person name="Eichler E.E."/>
            <person name="Tuzun E."/>
            <person name="Birney E."/>
            <person name="Mongin E."/>
            <person name="Ureta-Vidal A."/>
            <person name="Woodwark C."/>
            <person name="Zdobnov E."/>
            <person name="Bork P."/>
            <person name="Suyama M."/>
            <person name="Torrents D."/>
            <person name="Alexandersson M."/>
            <person name="Trask B.J."/>
            <person name="Young J.M."/>
            <person name="Huang H."/>
            <person name="Wang H."/>
            <person name="Xing H."/>
            <person name="Daniels S."/>
            <person name="Gietzen D."/>
            <person name="Schmidt J."/>
            <person name="Stevens K."/>
            <person name="Vitt U."/>
            <person name="Wingrove J."/>
            <person name="Camara F."/>
            <person name="Mar Alba M."/>
            <person name="Abril J.F."/>
            <person name="Guigo R."/>
            <person name="Smit A."/>
            <person name="Dubchak I."/>
            <person name="Rubin E.M."/>
            <person name="Couronne O."/>
            <person name="Poliakov A."/>
            <person name="Huebner N."/>
            <person name="Ganten D."/>
            <person name="Goesele C."/>
            <person name="Hummel O."/>
            <person name="Kreitler T."/>
            <person name="Lee Y.-A."/>
            <person name="Monti J."/>
            <person name="Schulz H."/>
            <person name="Zimdahl H."/>
            <person name="Himmelbauer H."/>
            <person name="Lehrach H."/>
            <person name="Jacob H.J."/>
            <person name="Bromberg S."/>
            <person name="Gullings-Handley J."/>
            <person name="Jensen-Seaman M.I."/>
            <person name="Kwitek A.E."/>
            <person name="Lazar J."/>
            <person name="Pasko D."/>
            <person name="Tonellato P.J."/>
            <person name="Twigger S."/>
            <person name="Ponting C.P."/>
            <person name="Duarte J.M."/>
            <person name="Rice S."/>
            <person name="Goodstadt L."/>
            <person name="Beatson S.A."/>
            <person name="Emes R.D."/>
            <person name="Winter E.E."/>
            <person name="Webber C."/>
            <person name="Brandt P."/>
            <person name="Nyakatura G."/>
            <person name="Adetobi M."/>
            <person name="Chiaromonte F."/>
            <person name="Elnitski L."/>
            <person name="Eswara P."/>
            <person name="Hardison R.C."/>
            <person name="Hou M."/>
            <person name="Kolbe D."/>
            <person name="Makova K."/>
            <person name="Miller W."/>
            <person name="Nekrutenko A."/>
            <person name="Riemer C."/>
            <person name="Schwartz S."/>
            <person name="Taylor J."/>
            <person name="Yang S."/>
            <person name="Zhang Y."/>
            <person name="Lindpaintner K."/>
            <person name="Andrews T.D."/>
            <person name="Caccamo M."/>
            <person name="Clamp M."/>
            <person name="Clarke L."/>
            <person name="Curwen V."/>
            <person name="Durbin R.M."/>
            <person name="Eyras E."/>
            <person name="Searle S.M."/>
            <person name="Cooper G.M."/>
            <person name="Batzoglou S."/>
            <person name="Brudno M."/>
            <person name="Sidow A."/>
            <person name="Stone E.A."/>
            <person name="Payseur B.A."/>
            <person name="Bourque G."/>
            <person name="Lopez-Otin C."/>
            <person name="Puente X.S."/>
            <person name="Chakrabarti K."/>
            <person name="Chatterji S."/>
            <person name="Dewey C."/>
            <person name="Pachter L."/>
            <person name="Bray N."/>
            <person name="Yap V.B."/>
            <person name="Caspi A."/>
            <person name="Tesler G."/>
            <person name="Pevzner P.A."/>
            <person name="Haussler D."/>
            <person name="Roskin K.M."/>
            <person name="Baertsch R."/>
            <person name="Clawson H."/>
            <person name="Furey T.S."/>
            <person name="Hinrichs A.S."/>
            <person name="Karolchik D."/>
            <person name="Kent W.J."/>
            <person name="Rosenbloom K.R."/>
            <person name="Trumbower H."/>
            <person name="Weirauch M."/>
            <person name="Cooper D.N."/>
            <person name="Stenson P.D."/>
            <person name="Ma B."/>
            <person name="Brent M."/>
            <person name="Arumugam M."/>
            <person name="Shteynberg D."/>
            <person name="Copley R.R."/>
            <person name="Taylor M.S."/>
            <person name="Riethman H."/>
            <person name="Mudunuri U."/>
            <person name="Peterson J."/>
            <person name="Guyer M."/>
            <person name="Felsenfeld A."/>
            <person name="Old S."/>
            <person name="Mockrin S."/>
            <person name="Collins F.S."/>
        </authorList>
    </citation>
    <scope>NUCLEOTIDE SEQUENCE [LARGE SCALE GENOMIC DNA]</scope>
    <source>
        <strain evidence="8">Brown Norway</strain>
    </source>
</reference>
<sequence length="366" mass="42415">MTVRNIASICNMGTNASALEKDIGPEQFPINEHYFGLVNFGNTCYCNSVLQALYFCRPFRENVLAYKAQQKKKENLLTCLADLFHSIATQKKKVGVIPPKKFISRLRKENDLFDNYMQQDAHEFLNYLLNTIADILQEEKKQEKQNGKLKNGNMNEPAENSKPELTWVHEIFQGTLTNETRCLNCETVSSKDEDFLDLSVDVEQNTSITHCLRDFSNTETLCSEQKYYCETCCSKQEAQKRMRVKKLPMILALHLKRFKYMEQLHRYTKLSYRVVFPLELRLFNTSSDAVNLDRMYDLVAVVVHCGSGPNRGHYITIVKSHGFWLLFDDDIVEKIDAQAIEEFYGLTSDISKNSESGYILFYQSRE</sequence>
<accession>F1M625</accession>
<accession>G8ACC6</accession>
<feature type="chain" id="PRO_0000435846" description="Ubiquitin carboxyl-terminal hydrolase 46">
    <location>
        <begin position="1"/>
        <end position="366"/>
    </location>
</feature>
<feature type="domain" description="USP" evidence="3">
    <location>
        <begin position="35"/>
        <end position="365"/>
    </location>
</feature>
<feature type="active site" description="Nucleophile" evidence="3 6">
    <location>
        <position position="44"/>
    </location>
</feature>
<feature type="active site" description="Proton acceptor" evidence="3">
    <location>
        <position position="313"/>
    </location>
</feature>
<feature type="binding site" evidence="1">
    <location>
        <position position="182"/>
    </location>
    <ligand>
        <name>Zn(2+)</name>
        <dbReference type="ChEBI" id="CHEBI:29105"/>
    </ligand>
</feature>
<feature type="binding site" evidence="1">
    <location>
        <position position="185"/>
    </location>
    <ligand>
        <name>Zn(2+)</name>
        <dbReference type="ChEBI" id="CHEBI:29105"/>
    </ligand>
</feature>
<feature type="binding site" evidence="1">
    <location>
        <position position="229"/>
    </location>
    <ligand>
        <name>Zn(2+)</name>
        <dbReference type="ChEBI" id="CHEBI:29105"/>
    </ligand>
</feature>
<feature type="binding site" evidence="1">
    <location>
        <position position="232"/>
    </location>
    <ligand>
        <name>Zn(2+)</name>
        <dbReference type="ChEBI" id="CHEBI:29105"/>
    </ligand>
</feature>
<feature type="mutagenesis site" description="Abolishes enzyme activity." evidence="4">
    <original>C</original>
    <variation>S</variation>
    <location>
        <position position="44"/>
    </location>
</feature>
<feature type="mutagenesis site" description="Mildly decreases enzyme activity." evidence="4">
    <location>
        <position position="92"/>
    </location>
</feature>
<keyword id="KW-0085">Behavior</keyword>
<keyword id="KW-0963">Cytoplasm</keyword>
<keyword id="KW-0378">Hydrolase</keyword>
<keyword id="KW-0479">Metal-binding</keyword>
<keyword id="KW-0645">Protease</keyword>
<keyword id="KW-1185">Reference proteome</keyword>
<keyword id="KW-0788">Thiol protease</keyword>
<keyword id="KW-0833">Ubl conjugation pathway</keyword>
<keyword id="KW-0862">Zinc</keyword>
<gene>
    <name evidence="9" type="primary">Usp46</name>
</gene>
<organism>
    <name type="scientific">Rattus norvegicus</name>
    <name type="common">Rat</name>
    <dbReference type="NCBI Taxonomy" id="10116"/>
    <lineage>
        <taxon>Eukaryota</taxon>
        <taxon>Metazoa</taxon>
        <taxon>Chordata</taxon>
        <taxon>Craniata</taxon>
        <taxon>Vertebrata</taxon>
        <taxon>Euteleostomi</taxon>
        <taxon>Mammalia</taxon>
        <taxon>Eutheria</taxon>
        <taxon>Euarchontoglires</taxon>
        <taxon>Glires</taxon>
        <taxon>Rodentia</taxon>
        <taxon>Myomorpha</taxon>
        <taxon>Muroidea</taxon>
        <taxon>Muridae</taxon>
        <taxon>Murinae</taxon>
        <taxon>Rattus</taxon>
    </lineage>
</organism>
<evidence type="ECO:0000250" key="1">
    <source>
        <dbReference type="UniProtKB" id="P62068"/>
    </source>
</evidence>
<evidence type="ECO:0000250" key="2">
    <source>
        <dbReference type="UniProtKB" id="P62069"/>
    </source>
</evidence>
<evidence type="ECO:0000255" key="3">
    <source>
        <dbReference type="PROSITE-ProRule" id="PRU01035"/>
    </source>
</evidence>
<evidence type="ECO:0000269" key="4">
    <source>
    </source>
</evidence>
<evidence type="ECO:0000305" key="5"/>
<evidence type="ECO:0000305" key="6">
    <source>
    </source>
</evidence>
<evidence type="ECO:0000312" key="7">
    <source>
        <dbReference type="EMBL" id="ADV57650.1"/>
    </source>
</evidence>
<evidence type="ECO:0000312" key="8">
    <source>
        <dbReference type="Proteomes" id="UP000002494"/>
    </source>
</evidence>
<evidence type="ECO:0000312" key="9">
    <source>
        <dbReference type="RGD" id="1564808"/>
    </source>
</evidence>
<proteinExistence type="evidence at protein level"/>
<protein>
    <recommendedName>
        <fullName>Ubiquitin carboxyl-terminal hydrolase 46</fullName>
        <ecNumber evidence="4">3.4.19.12</ecNumber>
    </recommendedName>
    <alternativeName>
        <fullName>Deubiquitinating enzyme 46</fullName>
    </alternativeName>
    <alternativeName>
        <fullName>Ubiquitin thioesterase 46</fullName>
    </alternativeName>
    <alternativeName>
        <fullName>Ubiquitin-specific-processing protease 46</fullName>
    </alternativeName>
</protein>
<dbReference type="EC" id="3.4.19.12" evidence="4"/>
<dbReference type="EMBL" id="GU455413">
    <property type="protein sequence ID" value="ADV57650.1"/>
    <property type="molecule type" value="mRNA"/>
</dbReference>
<dbReference type="EMBL" id="AABR07072397">
    <property type="status" value="NOT_ANNOTATED_CDS"/>
    <property type="molecule type" value="Genomic_DNA"/>
</dbReference>
<dbReference type="EMBL" id="AC114452">
    <property type="status" value="NOT_ANNOTATED_CDS"/>
    <property type="molecule type" value="Genomic_DNA"/>
</dbReference>
<dbReference type="RefSeq" id="NP_001178525.1">
    <property type="nucleotide sequence ID" value="NM_001191596.1"/>
</dbReference>
<dbReference type="SMR" id="F1M625"/>
<dbReference type="FunCoup" id="F1M625">
    <property type="interactions" value="3000"/>
</dbReference>
<dbReference type="STRING" id="10116.ENSRNOP00000002879"/>
<dbReference type="MEROPS" id="C19.052"/>
<dbReference type="PhosphoSitePlus" id="F1M625"/>
<dbReference type="PaxDb" id="10116-ENSRNOP00000002879"/>
<dbReference type="GeneID" id="289584"/>
<dbReference type="KEGG" id="rno:289584"/>
<dbReference type="AGR" id="RGD:1564808"/>
<dbReference type="CTD" id="64854"/>
<dbReference type="RGD" id="1564808">
    <property type="gene designation" value="Usp46"/>
</dbReference>
<dbReference type="VEuPathDB" id="HostDB:ENSRNOG00000002106"/>
<dbReference type="eggNOG" id="KOG1864">
    <property type="taxonomic scope" value="Eukaryota"/>
</dbReference>
<dbReference type="HOGENOM" id="CLU_008279_2_0_1"/>
<dbReference type="InParanoid" id="F1M625"/>
<dbReference type="TreeFam" id="TF314144"/>
<dbReference type="PRO" id="PR:F1M625"/>
<dbReference type="Proteomes" id="UP000002494">
    <property type="component" value="Chromosome 14"/>
</dbReference>
<dbReference type="Bgee" id="ENSRNOG00000002106">
    <property type="expression patterns" value="Expressed in brain and 19 other cell types or tissues"/>
</dbReference>
<dbReference type="ExpressionAtlas" id="F1M625">
    <property type="expression patterns" value="baseline and differential"/>
</dbReference>
<dbReference type="GO" id="GO:0005737">
    <property type="term" value="C:cytoplasm"/>
    <property type="evidence" value="ECO:0000250"/>
    <property type="project" value="UniProtKB"/>
</dbReference>
<dbReference type="GO" id="GO:0005829">
    <property type="term" value="C:cytosol"/>
    <property type="evidence" value="ECO:0000318"/>
    <property type="project" value="GO_Central"/>
</dbReference>
<dbReference type="GO" id="GO:0098978">
    <property type="term" value="C:glutamatergic synapse"/>
    <property type="evidence" value="ECO:0000314"/>
    <property type="project" value="SynGO"/>
</dbReference>
<dbReference type="GO" id="GO:0005634">
    <property type="term" value="C:nucleus"/>
    <property type="evidence" value="ECO:0000318"/>
    <property type="project" value="GO_Central"/>
</dbReference>
<dbReference type="GO" id="GO:0045202">
    <property type="term" value="C:synapse"/>
    <property type="evidence" value="ECO:0000314"/>
    <property type="project" value="SynGO"/>
</dbReference>
<dbReference type="GO" id="GO:0004843">
    <property type="term" value="F:cysteine-type deubiquitinase activity"/>
    <property type="evidence" value="ECO:0000266"/>
    <property type="project" value="RGD"/>
</dbReference>
<dbReference type="GO" id="GO:0101005">
    <property type="term" value="F:deubiquitinase activity"/>
    <property type="evidence" value="ECO:0000266"/>
    <property type="project" value="RGD"/>
</dbReference>
<dbReference type="GO" id="GO:0046872">
    <property type="term" value="F:metal ion binding"/>
    <property type="evidence" value="ECO:0007669"/>
    <property type="project" value="UniProtKB-KW"/>
</dbReference>
<dbReference type="GO" id="GO:0008343">
    <property type="term" value="P:adult feeding behavior"/>
    <property type="evidence" value="ECO:0000266"/>
    <property type="project" value="RGD"/>
</dbReference>
<dbReference type="GO" id="GO:0001662">
    <property type="term" value="P:behavioral fear response"/>
    <property type="evidence" value="ECO:0000266"/>
    <property type="project" value="RGD"/>
</dbReference>
<dbReference type="GO" id="GO:0048149">
    <property type="term" value="P:behavioral response to ethanol"/>
    <property type="evidence" value="ECO:0000266"/>
    <property type="project" value="RGD"/>
</dbReference>
<dbReference type="GO" id="GO:0016579">
    <property type="term" value="P:protein deubiquitination"/>
    <property type="evidence" value="ECO:0000266"/>
    <property type="project" value="RGD"/>
</dbReference>
<dbReference type="GO" id="GO:0006508">
    <property type="term" value="P:proteolysis"/>
    <property type="evidence" value="ECO:0007669"/>
    <property type="project" value="UniProtKB-KW"/>
</dbReference>
<dbReference type="GO" id="GO:0099149">
    <property type="term" value="P:regulation of postsynaptic neurotransmitter receptor internalization"/>
    <property type="evidence" value="ECO:0000314"/>
    <property type="project" value="SynGO"/>
</dbReference>
<dbReference type="GO" id="GO:0031647">
    <property type="term" value="P:regulation of protein stability"/>
    <property type="evidence" value="ECO:0000318"/>
    <property type="project" value="GO_Central"/>
</dbReference>
<dbReference type="GO" id="GO:0032228">
    <property type="term" value="P:regulation of synaptic transmission, GABAergic"/>
    <property type="evidence" value="ECO:0000266"/>
    <property type="project" value="RGD"/>
</dbReference>
<dbReference type="GO" id="GO:0060013">
    <property type="term" value="P:righting reflex"/>
    <property type="evidence" value="ECO:0000266"/>
    <property type="project" value="RGD"/>
</dbReference>
<dbReference type="CDD" id="cd02663">
    <property type="entry name" value="Peptidase_C19G"/>
    <property type="match status" value="1"/>
</dbReference>
<dbReference type="FunFam" id="3.90.70.10:FF:000003">
    <property type="entry name" value="Ubiquitin carboxyl-terminal hydrolase 46"/>
    <property type="match status" value="1"/>
</dbReference>
<dbReference type="Gene3D" id="3.90.70.10">
    <property type="entry name" value="Cysteine proteinases"/>
    <property type="match status" value="1"/>
</dbReference>
<dbReference type="InterPro" id="IPR038765">
    <property type="entry name" value="Papain-like_cys_pep_sf"/>
</dbReference>
<dbReference type="InterPro" id="IPR050164">
    <property type="entry name" value="Peptidase_C19"/>
</dbReference>
<dbReference type="InterPro" id="IPR001394">
    <property type="entry name" value="Peptidase_C19_UCH"/>
</dbReference>
<dbReference type="InterPro" id="IPR018200">
    <property type="entry name" value="USP_CS"/>
</dbReference>
<dbReference type="InterPro" id="IPR028889">
    <property type="entry name" value="USP_dom"/>
</dbReference>
<dbReference type="PANTHER" id="PTHR24006">
    <property type="entry name" value="UBIQUITIN CARBOXYL-TERMINAL HYDROLASE"/>
    <property type="match status" value="1"/>
</dbReference>
<dbReference type="PANTHER" id="PTHR24006:SF714">
    <property type="entry name" value="UBIQUITIN CARBOXYL-TERMINAL HYDROLASE 46"/>
    <property type="match status" value="1"/>
</dbReference>
<dbReference type="Pfam" id="PF00443">
    <property type="entry name" value="UCH"/>
    <property type="match status" value="1"/>
</dbReference>
<dbReference type="SUPFAM" id="SSF54001">
    <property type="entry name" value="Cysteine proteinases"/>
    <property type="match status" value="1"/>
</dbReference>
<dbReference type="PROSITE" id="PS00972">
    <property type="entry name" value="USP_1"/>
    <property type="match status" value="1"/>
</dbReference>
<dbReference type="PROSITE" id="PS00973">
    <property type="entry name" value="USP_2"/>
    <property type="match status" value="1"/>
</dbReference>
<dbReference type="PROSITE" id="PS50235">
    <property type="entry name" value="USP_3"/>
    <property type="match status" value="1"/>
</dbReference>
<name>UBP46_RAT</name>